<keyword id="KW-0150">Chloroplast</keyword>
<keyword id="KW-0472">Membrane</keyword>
<keyword id="KW-0602">Photosynthesis</keyword>
<keyword id="KW-0603">Photosystem I</keyword>
<keyword id="KW-0934">Plastid</keyword>
<keyword id="KW-0793">Thylakoid</keyword>
<keyword id="KW-0812">Transmembrane</keyword>
<keyword id="KW-1133">Transmembrane helix</keyword>
<reference key="1">
    <citation type="journal article" date="2006" name="Theor. Appl. Genet.">
        <title>Complete chloroplast genome sequences of Solanum bulbocastanum, Solanum lycopersicum and comparative analyses with other Solanaceae genomes.</title>
        <authorList>
            <person name="Daniell H."/>
            <person name="Lee S.-B."/>
            <person name="Grevich J."/>
            <person name="Saski C."/>
            <person name="Quesada-Vargas T."/>
            <person name="Guda C."/>
            <person name="Tomkins J."/>
            <person name="Jansen R.K."/>
        </authorList>
    </citation>
    <scope>NUCLEOTIDE SEQUENCE [LARGE SCALE GENOMIC DNA]</scope>
    <source>
        <strain>cv. PT29</strain>
    </source>
</reference>
<proteinExistence type="inferred from homology"/>
<gene>
    <name evidence="1" type="primary">psaJ</name>
</gene>
<comment type="function">
    <text evidence="1">May help in the organization of the PsaE and PsaF subunits.</text>
</comment>
<comment type="subcellular location">
    <subcellularLocation>
        <location evidence="1">Plastid</location>
        <location evidence="1">Chloroplast thylakoid membrane</location>
        <topology evidence="1">Single-pass membrane protein</topology>
    </subcellularLocation>
</comment>
<comment type="similarity">
    <text evidence="1">Belongs to the PsaJ family.</text>
</comment>
<name>PSAJ_SOLBU</name>
<organism>
    <name type="scientific">Solanum bulbocastanum</name>
    <name type="common">Wild potato</name>
    <dbReference type="NCBI Taxonomy" id="147425"/>
    <lineage>
        <taxon>Eukaryota</taxon>
        <taxon>Viridiplantae</taxon>
        <taxon>Streptophyta</taxon>
        <taxon>Embryophyta</taxon>
        <taxon>Tracheophyta</taxon>
        <taxon>Spermatophyta</taxon>
        <taxon>Magnoliopsida</taxon>
        <taxon>eudicotyledons</taxon>
        <taxon>Gunneridae</taxon>
        <taxon>Pentapetalae</taxon>
        <taxon>asterids</taxon>
        <taxon>lamiids</taxon>
        <taxon>Solanales</taxon>
        <taxon>Solanaceae</taxon>
        <taxon>Solanoideae</taxon>
        <taxon>Solaneae</taxon>
        <taxon>Solanum</taxon>
    </lineage>
</organism>
<geneLocation type="chloroplast"/>
<sequence length="44" mass="5027">MRDLKTYLSVAPVLSTLWFGALAGLLIEINRFFPDALTFPFFSF</sequence>
<dbReference type="EMBL" id="DQ347958">
    <property type="protein sequence ID" value="ABC56233.1"/>
    <property type="molecule type" value="Genomic_DNA"/>
</dbReference>
<dbReference type="RefSeq" id="YP_538868.1">
    <property type="nucleotide sequence ID" value="NC_007943.1"/>
</dbReference>
<dbReference type="SMR" id="Q2MIG7"/>
<dbReference type="GeneID" id="3989446"/>
<dbReference type="GO" id="GO:0009535">
    <property type="term" value="C:chloroplast thylakoid membrane"/>
    <property type="evidence" value="ECO:0007669"/>
    <property type="project" value="UniProtKB-SubCell"/>
</dbReference>
<dbReference type="GO" id="GO:0009522">
    <property type="term" value="C:photosystem I"/>
    <property type="evidence" value="ECO:0007669"/>
    <property type="project" value="UniProtKB-KW"/>
</dbReference>
<dbReference type="GO" id="GO:0015979">
    <property type="term" value="P:photosynthesis"/>
    <property type="evidence" value="ECO:0007669"/>
    <property type="project" value="UniProtKB-UniRule"/>
</dbReference>
<dbReference type="FunFam" id="1.20.5.510:FF:000001">
    <property type="entry name" value="Photosystem I reaction center subunit IX"/>
    <property type="match status" value="1"/>
</dbReference>
<dbReference type="Gene3D" id="1.20.5.510">
    <property type="entry name" value="Single helix bin"/>
    <property type="match status" value="1"/>
</dbReference>
<dbReference type="HAMAP" id="MF_00522">
    <property type="entry name" value="PSI_PsaJ"/>
    <property type="match status" value="1"/>
</dbReference>
<dbReference type="InterPro" id="IPR002615">
    <property type="entry name" value="PSI_PsaJ"/>
</dbReference>
<dbReference type="InterPro" id="IPR036062">
    <property type="entry name" value="PSI_PsaJ_sf"/>
</dbReference>
<dbReference type="PANTHER" id="PTHR36082">
    <property type="match status" value="1"/>
</dbReference>
<dbReference type="PANTHER" id="PTHR36082:SF2">
    <property type="entry name" value="PHOTOSYSTEM I REACTION CENTER SUBUNIT IX"/>
    <property type="match status" value="1"/>
</dbReference>
<dbReference type="Pfam" id="PF01701">
    <property type="entry name" value="PSI_PsaJ"/>
    <property type="match status" value="1"/>
</dbReference>
<dbReference type="SUPFAM" id="SSF81544">
    <property type="entry name" value="Subunit IX of photosystem I reaction centre, PsaJ"/>
    <property type="match status" value="1"/>
</dbReference>
<protein>
    <recommendedName>
        <fullName evidence="1">Photosystem I reaction center subunit IX</fullName>
    </recommendedName>
    <alternativeName>
        <fullName evidence="1">PSI-J</fullName>
    </alternativeName>
</protein>
<feature type="chain" id="PRO_0000276075" description="Photosystem I reaction center subunit IX">
    <location>
        <begin position="1"/>
        <end position="44"/>
    </location>
</feature>
<feature type="transmembrane region" description="Helical" evidence="1">
    <location>
        <begin position="7"/>
        <end position="27"/>
    </location>
</feature>
<evidence type="ECO:0000255" key="1">
    <source>
        <dbReference type="HAMAP-Rule" id="MF_00522"/>
    </source>
</evidence>
<accession>Q2MIG7</accession>